<dbReference type="EC" id="3.1.3.48"/>
<dbReference type="EMBL" id="AF300943">
    <property type="protein sequence ID" value="AAG40194.1"/>
    <property type="molecule type" value="mRNA"/>
</dbReference>
<dbReference type="EMBL" id="AL626764">
    <property type="status" value="NOT_ANNOTATED_CDS"/>
    <property type="molecule type" value="Genomic_DNA"/>
</dbReference>
<dbReference type="EMBL" id="AL807774">
    <property type="status" value="NOT_ANNOTATED_CDS"/>
    <property type="molecule type" value="Genomic_DNA"/>
</dbReference>
<dbReference type="EMBL" id="BC057166">
    <property type="protein sequence ID" value="AAH57166.1"/>
    <property type="molecule type" value="mRNA"/>
</dbReference>
<dbReference type="CCDS" id="CCDS18546.1"/>
<dbReference type="RefSeq" id="NP_035343.2">
    <property type="nucleotide sequence ID" value="NM_011213.2"/>
</dbReference>
<dbReference type="PDB" id="3PXH">
    <property type="method" value="X-ray"/>
    <property type="resolution" value="2.00 A"/>
    <property type="chains" value="A=30-226"/>
</dbReference>
<dbReference type="PDB" id="6X39">
    <property type="method" value="X-ray"/>
    <property type="resolution" value="1.70 A"/>
    <property type="chains" value="A=709-812"/>
</dbReference>
<dbReference type="PDBsum" id="3PXH"/>
<dbReference type="PDBsum" id="6X39"/>
<dbReference type="SMR" id="A2A8L5"/>
<dbReference type="BioGRID" id="202497">
    <property type="interactions" value="18"/>
</dbReference>
<dbReference type="FunCoup" id="A2A8L5">
    <property type="interactions" value="1038"/>
</dbReference>
<dbReference type="IntAct" id="A2A8L5">
    <property type="interactions" value="3"/>
</dbReference>
<dbReference type="MINT" id="A2A8L5"/>
<dbReference type="STRING" id="10090.ENSMUSP00000039368"/>
<dbReference type="GlyConnect" id="2669">
    <property type="glycosylation" value="2 N-Linked glycans (3 sites)"/>
</dbReference>
<dbReference type="GlyCosmos" id="A2A8L5">
    <property type="glycosylation" value="7 sites, 2 glycans"/>
</dbReference>
<dbReference type="GlyGen" id="A2A8L5">
    <property type="glycosylation" value="12 sites, 9 N-linked glycans (7 sites), 1 O-linked glycan (2 sites)"/>
</dbReference>
<dbReference type="iPTMnet" id="A2A8L5"/>
<dbReference type="PhosphoSitePlus" id="A2A8L5"/>
<dbReference type="SwissPalm" id="A2A8L5"/>
<dbReference type="CPTAC" id="non-CPTAC-3600"/>
<dbReference type="jPOST" id="A2A8L5"/>
<dbReference type="PaxDb" id="10090-ENSMUSP00000039368"/>
<dbReference type="PeptideAtlas" id="A2A8L5"/>
<dbReference type="ProteomicsDB" id="301976"/>
<dbReference type="Pumba" id="A2A8L5"/>
<dbReference type="ABCD" id="A2A8L5">
    <property type="antibodies" value="2 sequenced antibodies"/>
</dbReference>
<dbReference type="Antibodypedia" id="2499">
    <property type="antibodies" value="318 antibodies from 34 providers"/>
</dbReference>
<dbReference type="DNASU" id="19268"/>
<dbReference type="Ensembl" id="ENSMUST00000049074.13">
    <property type="protein sequence ID" value="ENSMUSP00000039368.7"/>
    <property type="gene ID" value="ENSMUSG00000033295.15"/>
</dbReference>
<dbReference type="GeneID" id="19268"/>
<dbReference type="KEGG" id="mmu:19268"/>
<dbReference type="UCSC" id="uc008ujq.1">
    <property type="organism name" value="mouse"/>
</dbReference>
<dbReference type="AGR" id="MGI:102695"/>
<dbReference type="CTD" id="5792"/>
<dbReference type="MGI" id="MGI:102695">
    <property type="gene designation" value="Ptprf"/>
</dbReference>
<dbReference type="VEuPathDB" id="HostDB:ENSMUSG00000033295"/>
<dbReference type="eggNOG" id="KOG4228">
    <property type="taxonomic scope" value="Eukaryota"/>
</dbReference>
<dbReference type="GeneTree" id="ENSGT00940000155060"/>
<dbReference type="HOGENOM" id="CLU_001645_4_0_1"/>
<dbReference type="InParanoid" id="A2A8L5"/>
<dbReference type="OMA" id="YWAAENE"/>
<dbReference type="OrthoDB" id="10253954at2759"/>
<dbReference type="PhylomeDB" id="A2A8L5"/>
<dbReference type="TreeFam" id="TF312900"/>
<dbReference type="Reactome" id="R-MMU-388844">
    <property type="pathway name" value="Receptor-type tyrosine-protein phosphatases"/>
</dbReference>
<dbReference type="Reactome" id="R-MMU-77387">
    <property type="pathway name" value="Insulin receptor recycling"/>
</dbReference>
<dbReference type="Reactome" id="R-MMU-8849932">
    <property type="pathway name" value="Synaptic adhesion-like molecules"/>
</dbReference>
<dbReference type="BioGRID-ORCS" id="19268">
    <property type="hits" value="3 hits in 79 CRISPR screens"/>
</dbReference>
<dbReference type="CD-CODE" id="CE726F99">
    <property type="entry name" value="Postsynaptic density"/>
</dbReference>
<dbReference type="ChiTaRS" id="Ptprf">
    <property type="organism name" value="mouse"/>
</dbReference>
<dbReference type="EvolutionaryTrace" id="A2A8L5"/>
<dbReference type="PRO" id="PR:A2A8L5"/>
<dbReference type="Proteomes" id="UP000000589">
    <property type="component" value="Chromosome 4"/>
</dbReference>
<dbReference type="RNAct" id="A2A8L5">
    <property type="molecule type" value="protein"/>
</dbReference>
<dbReference type="Bgee" id="ENSMUSG00000033295">
    <property type="expression patterns" value="Expressed in metanephric ureteric bud and 256 other cell types or tissues"/>
</dbReference>
<dbReference type="ExpressionAtlas" id="A2A8L5">
    <property type="expression patterns" value="baseline and differential"/>
</dbReference>
<dbReference type="GO" id="GO:0016020">
    <property type="term" value="C:membrane"/>
    <property type="evidence" value="ECO:0007669"/>
    <property type="project" value="UniProtKB-SubCell"/>
</dbReference>
<dbReference type="GO" id="GO:0043005">
    <property type="term" value="C:neuron projection"/>
    <property type="evidence" value="ECO:0000314"/>
    <property type="project" value="MGI"/>
</dbReference>
<dbReference type="GO" id="GO:0043025">
    <property type="term" value="C:neuronal cell body"/>
    <property type="evidence" value="ECO:0000314"/>
    <property type="project" value="MGI"/>
</dbReference>
<dbReference type="GO" id="GO:0050839">
    <property type="term" value="F:cell adhesion molecule binding"/>
    <property type="evidence" value="ECO:0007669"/>
    <property type="project" value="Ensembl"/>
</dbReference>
<dbReference type="GO" id="GO:0035373">
    <property type="term" value="F:chondroitin sulfate proteoglycan binding"/>
    <property type="evidence" value="ECO:0000353"/>
    <property type="project" value="MGI"/>
</dbReference>
<dbReference type="GO" id="GO:0008201">
    <property type="term" value="F:heparin binding"/>
    <property type="evidence" value="ECO:0007669"/>
    <property type="project" value="UniProtKB-KW"/>
</dbReference>
<dbReference type="GO" id="GO:0004721">
    <property type="term" value="F:phosphoprotein phosphatase activity"/>
    <property type="evidence" value="ECO:0000266"/>
    <property type="project" value="MGI"/>
</dbReference>
<dbReference type="GO" id="GO:0004725">
    <property type="term" value="F:protein tyrosine phosphatase activity"/>
    <property type="evidence" value="ECO:0000250"/>
    <property type="project" value="UniProtKB"/>
</dbReference>
<dbReference type="GO" id="GO:0044877">
    <property type="term" value="F:protein-containing complex binding"/>
    <property type="evidence" value="ECO:0000314"/>
    <property type="project" value="MGI"/>
</dbReference>
<dbReference type="GO" id="GO:0016477">
    <property type="term" value="P:cell migration"/>
    <property type="evidence" value="ECO:0000250"/>
    <property type="project" value="UniProtKB"/>
</dbReference>
<dbReference type="GO" id="GO:1900121">
    <property type="term" value="P:negative regulation of receptor binding"/>
    <property type="evidence" value="ECO:0000250"/>
    <property type="project" value="UniProtKB"/>
</dbReference>
<dbReference type="GO" id="GO:0031102">
    <property type="term" value="P:neuron projection regeneration"/>
    <property type="evidence" value="ECO:0000315"/>
    <property type="project" value="MGI"/>
</dbReference>
<dbReference type="GO" id="GO:0035335">
    <property type="term" value="P:peptidyl-tyrosine dephosphorylation"/>
    <property type="evidence" value="ECO:0000250"/>
    <property type="project" value="UniProtKB"/>
</dbReference>
<dbReference type="GO" id="GO:0048679">
    <property type="term" value="P:regulation of axon regeneration"/>
    <property type="evidence" value="ECO:0000315"/>
    <property type="project" value="MGI"/>
</dbReference>
<dbReference type="GO" id="GO:0010975">
    <property type="term" value="P:regulation of neuron projection development"/>
    <property type="evidence" value="ECO:0000315"/>
    <property type="project" value="MGI"/>
</dbReference>
<dbReference type="GO" id="GO:0099560">
    <property type="term" value="P:synaptic membrane adhesion"/>
    <property type="evidence" value="ECO:0007669"/>
    <property type="project" value="Ensembl"/>
</dbReference>
<dbReference type="CDD" id="cd00063">
    <property type="entry name" value="FN3"/>
    <property type="match status" value="8"/>
</dbReference>
<dbReference type="CDD" id="cd05738">
    <property type="entry name" value="IgI_2_RPTP_IIa_LAR_like"/>
    <property type="match status" value="1"/>
</dbReference>
<dbReference type="CDD" id="cd05739">
    <property type="entry name" value="IgI_3_RPTP_IIa_LAR_like"/>
    <property type="match status" value="1"/>
</dbReference>
<dbReference type="CDD" id="cd14629">
    <property type="entry name" value="R-PTP-F-2"/>
    <property type="match status" value="1"/>
</dbReference>
<dbReference type="FunFam" id="2.60.40.10:FF:000010">
    <property type="entry name" value="receptor-type tyrosine-protein phosphatase delta isoform X1"/>
    <property type="match status" value="1"/>
</dbReference>
<dbReference type="FunFam" id="2.60.40.10:FF:000027">
    <property type="entry name" value="receptor-type tyrosine-protein phosphatase delta isoform X1"/>
    <property type="match status" value="1"/>
</dbReference>
<dbReference type="FunFam" id="2.60.40.10:FF:000036">
    <property type="entry name" value="receptor-type tyrosine-protein phosphatase delta isoform X1"/>
    <property type="match status" value="1"/>
</dbReference>
<dbReference type="FunFam" id="2.60.40.10:FF:000066">
    <property type="entry name" value="receptor-type tyrosine-protein phosphatase delta isoform X1"/>
    <property type="match status" value="1"/>
</dbReference>
<dbReference type="FunFam" id="2.60.40.10:FF:000144">
    <property type="entry name" value="receptor-type tyrosine-protein phosphatase delta isoform X1"/>
    <property type="match status" value="1"/>
</dbReference>
<dbReference type="FunFam" id="2.60.40.10:FF:000015">
    <property type="entry name" value="receptor-type tyrosine-protein phosphatase delta isoform X2"/>
    <property type="match status" value="1"/>
</dbReference>
<dbReference type="FunFam" id="2.60.40.10:FF:000023">
    <property type="entry name" value="receptor-type tyrosine-protein phosphatase delta isoform X2"/>
    <property type="match status" value="1"/>
</dbReference>
<dbReference type="FunFam" id="2.60.40.10:FF:000082">
    <property type="entry name" value="receptor-type tyrosine-protein phosphatase delta isoform X2"/>
    <property type="match status" value="1"/>
</dbReference>
<dbReference type="FunFam" id="2.60.40.10:FF:000128">
    <property type="entry name" value="receptor-type tyrosine-protein phosphatase delta isoform X2"/>
    <property type="match status" value="1"/>
</dbReference>
<dbReference type="FunFam" id="3.90.190.10:FF:000002">
    <property type="entry name" value="receptor-type tyrosine-protein phosphatase delta isoform X2"/>
    <property type="match status" value="1"/>
</dbReference>
<dbReference type="FunFam" id="3.90.190.10:FF:000001">
    <property type="entry name" value="Receptor-type tyrosine-protein phosphatase F isoform A"/>
    <property type="match status" value="1"/>
</dbReference>
<dbReference type="FunFam" id="2.60.40.10:FF:000098">
    <property type="entry name" value="receptor-type tyrosine-protein phosphatase F isoform X1"/>
    <property type="match status" value="1"/>
</dbReference>
<dbReference type="FunFam" id="2.60.40.10:FF:000353">
    <property type="entry name" value="receptor-type tyrosine-protein phosphatase F isoform X1"/>
    <property type="match status" value="1"/>
</dbReference>
<dbReference type="Gene3D" id="2.60.40.10">
    <property type="entry name" value="Immunoglobulins"/>
    <property type="match status" value="11"/>
</dbReference>
<dbReference type="Gene3D" id="3.90.190.10">
    <property type="entry name" value="Protein tyrosine phosphatase superfamily"/>
    <property type="match status" value="2"/>
</dbReference>
<dbReference type="InterPro" id="IPR003961">
    <property type="entry name" value="FN3_dom"/>
</dbReference>
<dbReference type="InterPro" id="IPR036116">
    <property type="entry name" value="FN3_sf"/>
</dbReference>
<dbReference type="InterPro" id="IPR007110">
    <property type="entry name" value="Ig-like_dom"/>
</dbReference>
<dbReference type="InterPro" id="IPR036179">
    <property type="entry name" value="Ig-like_dom_sf"/>
</dbReference>
<dbReference type="InterPro" id="IPR013783">
    <property type="entry name" value="Ig-like_fold"/>
</dbReference>
<dbReference type="InterPro" id="IPR013098">
    <property type="entry name" value="Ig_I-set"/>
</dbReference>
<dbReference type="InterPro" id="IPR003599">
    <property type="entry name" value="Ig_sub"/>
</dbReference>
<dbReference type="InterPro" id="IPR003598">
    <property type="entry name" value="Ig_sub2"/>
</dbReference>
<dbReference type="InterPro" id="IPR029021">
    <property type="entry name" value="Prot-tyrosine_phosphatase-like"/>
</dbReference>
<dbReference type="InterPro" id="IPR000242">
    <property type="entry name" value="PTP_cat"/>
</dbReference>
<dbReference type="InterPro" id="IPR050713">
    <property type="entry name" value="RTP_Phos/Ushers"/>
</dbReference>
<dbReference type="InterPro" id="IPR016130">
    <property type="entry name" value="Tyr_Pase_AS"/>
</dbReference>
<dbReference type="InterPro" id="IPR003595">
    <property type="entry name" value="Tyr_Pase_cat"/>
</dbReference>
<dbReference type="InterPro" id="IPR000387">
    <property type="entry name" value="Tyr_Pase_dom"/>
</dbReference>
<dbReference type="PANTHER" id="PTHR46957">
    <property type="entry name" value="CYTOKINE RECEPTOR"/>
    <property type="match status" value="1"/>
</dbReference>
<dbReference type="PANTHER" id="PTHR46957:SF9">
    <property type="entry name" value="PROTEIN-TYROSINE-PHOSPHATASE"/>
    <property type="match status" value="1"/>
</dbReference>
<dbReference type="Pfam" id="PF00041">
    <property type="entry name" value="fn3"/>
    <property type="match status" value="7"/>
</dbReference>
<dbReference type="Pfam" id="PF07679">
    <property type="entry name" value="I-set"/>
    <property type="match status" value="3"/>
</dbReference>
<dbReference type="Pfam" id="PF00102">
    <property type="entry name" value="Y_phosphatase"/>
    <property type="match status" value="2"/>
</dbReference>
<dbReference type="PRINTS" id="PR00014">
    <property type="entry name" value="FNTYPEIII"/>
</dbReference>
<dbReference type="PRINTS" id="PR00700">
    <property type="entry name" value="PRTYPHPHTASE"/>
</dbReference>
<dbReference type="SMART" id="SM00060">
    <property type="entry name" value="FN3"/>
    <property type="match status" value="8"/>
</dbReference>
<dbReference type="SMART" id="SM00409">
    <property type="entry name" value="IG"/>
    <property type="match status" value="3"/>
</dbReference>
<dbReference type="SMART" id="SM00408">
    <property type="entry name" value="IGc2"/>
    <property type="match status" value="3"/>
</dbReference>
<dbReference type="SMART" id="SM00194">
    <property type="entry name" value="PTPc"/>
    <property type="match status" value="2"/>
</dbReference>
<dbReference type="SMART" id="SM00404">
    <property type="entry name" value="PTPc_motif"/>
    <property type="match status" value="2"/>
</dbReference>
<dbReference type="SUPFAM" id="SSF52799">
    <property type="entry name" value="(Phosphotyrosine protein) phosphatases II"/>
    <property type="match status" value="2"/>
</dbReference>
<dbReference type="SUPFAM" id="SSF49265">
    <property type="entry name" value="Fibronectin type III"/>
    <property type="match status" value="5"/>
</dbReference>
<dbReference type="SUPFAM" id="SSF48726">
    <property type="entry name" value="Immunoglobulin"/>
    <property type="match status" value="3"/>
</dbReference>
<dbReference type="PROSITE" id="PS50853">
    <property type="entry name" value="FN3"/>
    <property type="match status" value="8"/>
</dbReference>
<dbReference type="PROSITE" id="PS50835">
    <property type="entry name" value="IG_LIKE"/>
    <property type="match status" value="3"/>
</dbReference>
<dbReference type="PROSITE" id="PS00383">
    <property type="entry name" value="TYR_PHOSPHATASE_1"/>
    <property type="match status" value="2"/>
</dbReference>
<dbReference type="PROSITE" id="PS50056">
    <property type="entry name" value="TYR_PHOSPHATASE_2"/>
    <property type="match status" value="2"/>
</dbReference>
<dbReference type="PROSITE" id="PS50055">
    <property type="entry name" value="TYR_PHOSPHATASE_PTP"/>
    <property type="match status" value="2"/>
</dbReference>
<organism>
    <name type="scientific">Mus musculus</name>
    <name type="common">Mouse</name>
    <dbReference type="NCBI Taxonomy" id="10090"/>
    <lineage>
        <taxon>Eukaryota</taxon>
        <taxon>Metazoa</taxon>
        <taxon>Chordata</taxon>
        <taxon>Craniata</taxon>
        <taxon>Vertebrata</taxon>
        <taxon>Euteleostomi</taxon>
        <taxon>Mammalia</taxon>
        <taxon>Eutheria</taxon>
        <taxon>Euarchontoglires</taxon>
        <taxon>Glires</taxon>
        <taxon>Rodentia</taxon>
        <taxon>Myomorpha</taxon>
        <taxon>Muroidea</taxon>
        <taxon>Muridae</taxon>
        <taxon>Murinae</taxon>
        <taxon>Mus</taxon>
        <taxon>Mus</taxon>
    </lineage>
</organism>
<proteinExistence type="evidence at protein level"/>
<feature type="signal peptide" evidence="3">
    <location>
        <begin position="1"/>
        <end position="29"/>
    </location>
</feature>
<feature type="chain" id="PRO_0000370193" description="Receptor-type tyrosine-protein phosphatase F">
    <location>
        <begin position="30"/>
        <end position="1898"/>
    </location>
</feature>
<feature type="topological domain" description="Extracellular" evidence="3">
    <location>
        <begin position="30"/>
        <end position="1254"/>
    </location>
</feature>
<feature type="transmembrane region" description="Helical" evidence="3">
    <location>
        <begin position="1255"/>
        <end position="1275"/>
    </location>
</feature>
<feature type="topological domain" description="Cytoplasmic" evidence="3">
    <location>
        <begin position="1276"/>
        <end position="1898"/>
    </location>
</feature>
<feature type="domain" description="Ig-like C2-type 1">
    <location>
        <begin position="33"/>
        <end position="123"/>
    </location>
</feature>
<feature type="domain" description="Ig-like C2-type 2">
    <location>
        <begin position="135"/>
        <end position="224"/>
    </location>
</feature>
<feature type="domain" description="Ig-like C2-type 3">
    <location>
        <begin position="232"/>
        <end position="314"/>
    </location>
</feature>
<feature type="domain" description="Fibronectin type-III 1" evidence="6">
    <location>
        <begin position="321"/>
        <end position="411"/>
    </location>
</feature>
<feature type="domain" description="Fibronectin type-III 2" evidence="6">
    <location>
        <begin position="416"/>
        <end position="510"/>
    </location>
</feature>
<feature type="domain" description="Fibronectin type-III 3" evidence="6">
    <location>
        <begin position="514"/>
        <end position="604"/>
    </location>
</feature>
<feature type="domain" description="Fibronectin type-III 4" evidence="6">
    <location>
        <begin position="609"/>
        <end position="706"/>
    </location>
</feature>
<feature type="domain" description="Fibronectin type-III 5" evidence="6">
    <location>
        <begin position="711"/>
        <end position="810"/>
    </location>
</feature>
<feature type="domain" description="Fibronectin type-III 6" evidence="6">
    <location>
        <begin position="811"/>
        <end position="904"/>
    </location>
</feature>
<feature type="domain" description="Fibronectin type-III 7" evidence="6">
    <location>
        <begin position="909"/>
        <end position="1001"/>
    </location>
</feature>
<feature type="domain" description="Fibronectin type-III 8" evidence="6">
    <location>
        <begin position="1005"/>
        <end position="1089"/>
    </location>
</feature>
<feature type="domain" description="Tyrosine-protein phosphatase 1" evidence="5">
    <location>
        <begin position="1343"/>
        <end position="1598"/>
    </location>
</feature>
<feature type="domain" description="Tyrosine-protein phosphatase 2" evidence="5">
    <location>
        <begin position="1630"/>
        <end position="1889"/>
    </location>
</feature>
<feature type="region of interest" description="Disordered" evidence="8">
    <location>
        <begin position="693"/>
        <end position="712"/>
    </location>
</feature>
<feature type="active site" description="Phosphocysteine intermediate" evidence="1">
    <location>
        <position position="1539"/>
    </location>
</feature>
<feature type="active site" description="Phosphocysteine intermediate" evidence="1">
    <location>
        <position position="1830"/>
    </location>
</feature>
<feature type="binding site">
    <location>
        <begin position="68"/>
        <end position="77"/>
    </location>
    <ligand>
        <name>heparin</name>
        <dbReference type="ChEBI" id="CHEBI:28304"/>
    </ligand>
</feature>
<feature type="binding site" evidence="1">
    <location>
        <position position="1507"/>
    </location>
    <ligand>
        <name>substrate</name>
    </ligand>
</feature>
<feature type="binding site" evidence="1">
    <location>
        <begin position="1539"/>
        <end position="1545"/>
    </location>
    <ligand>
        <name>substrate</name>
    </ligand>
</feature>
<feature type="binding site" evidence="1">
    <location>
        <position position="1583"/>
    </location>
    <ligand>
        <name>substrate</name>
    </ligand>
</feature>
<feature type="modified residue" description="Phosphoserine" evidence="2">
    <location>
        <position position="1296"/>
    </location>
</feature>
<feature type="glycosylation site" description="N-linked (GlcNAc...) asparagine" evidence="3">
    <location>
        <position position="117"/>
    </location>
</feature>
<feature type="glycosylation site" description="N-linked (GlcNAc...) asparagine" evidence="3">
    <location>
        <position position="250"/>
    </location>
</feature>
<feature type="glycosylation site" description="N-linked (GlcNAc...) asparagine" evidence="3">
    <location>
        <position position="295"/>
    </location>
</feature>
<feature type="glycosylation site" description="N-linked (GlcNAc...) asparagine" evidence="10">
    <location>
        <position position="721"/>
    </location>
</feature>
<feature type="glycosylation site" description="N-linked (GlcNAc...) asparagine" evidence="10">
    <location>
        <position position="941"/>
    </location>
</feature>
<feature type="glycosylation site" description="N-linked (GlcNAc...) asparagine" evidence="3">
    <location>
        <position position="957"/>
    </location>
</feature>
<feature type="glycosylation site" description="N-linked (GlcNAc...) asparagine" evidence="10">
    <location>
        <position position="960"/>
    </location>
</feature>
<feature type="disulfide bond" evidence="4 11">
    <location>
        <begin position="54"/>
        <end position="107"/>
    </location>
</feature>
<feature type="disulfide bond" evidence="4 11">
    <location>
        <begin position="156"/>
        <end position="207"/>
    </location>
</feature>
<feature type="disulfide bond" evidence="4">
    <location>
        <begin position="253"/>
        <end position="298"/>
    </location>
</feature>
<feature type="sequence conflict" description="In Ref. 1; AAG40194." evidence="12" ref="1">
    <original>G</original>
    <variation>E</variation>
    <location>
        <position position="47"/>
    </location>
</feature>
<feature type="sequence conflict" description="In Ref. 1; AAG40194." evidence="12" ref="1">
    <original>I</original>
    <variation>V</variation>
    <location>
        <position position="482"/>
    </location>
</feature>
<feature type="sequence conflict" description="In Ref. 1; AAG40194." evidence="12" ref="1">
    <original>QP</original>
    <variation>RS</variation>
    <location>
        <begin position="514"/>
        <end position="515"/>
    </location>
</feature>
<feature type="sequence conflict" description="In Ref. 1; AAG40194." evidence="12" ref="1">
    <original>H</original>
    <variation>R</variation>
    <location>
        <position position="579"/>
    </location>
</feature>
<feature type="sequence conflict" description="In Ref. 1; AAG40194." evidence="12" ref="1">
    <original>A</original>
    <variation>T</variation>
    <location>
        <position position="1006"/>
    </location>
</feature>
<feature type="sequence conflict" description="In Ref. 3; AAH57166." evidence="12" ref="3">
    <original>V</original>
    <variation>A</variation>
    <location>
        <position position="1184"/>
    </location>
</feature>
<feature type="sequence conflict" description="In Ref. 1; AAG40194." evidence="12" ref="1">
    <original>N</original>
    <variation>D</variation>
    <location>
        <position position="1374"/>
    </location>
</feature>
<feature type="strand" evidence="13">
    <location>
        <begin position="31"/>
        <end position="37"/>
    </location>
</feature>
<feature type="strand" evidence="13">
    <location>
        <begin position="42"/>
        <end position="45"/>
    </location>
</feature>
<feature type="strand" evidence="13">
    <location>
        <begin position="50"/>
        <end position="60"/>
    </location>
</feature>
<feature type="strand" evidence="13">
    <location>
        <begin position="63"/>
        <end position="68"/>
    </location>
</feature>
<feature type="strand" evidence="13">
    <location>
        <begin position="78"/>
        <end position="83"/>
    </location>
</feature>
<feature type="helix" evidence="13">
    <location>
        <begin position="84"/>
        <end position="86"/>
    </location>
</feature>
<feature type="strand" evidence="13">
    <location>
        <begin position="88"/>
        <end position="93"/>
    </location>
</feature>
<feature type="helix" evidence="13">
    <location>
        <begin position="98"/>
        <end position="101"/>
    </location>
</feature>
<feature type="strand" evidence="13">
    <location>
        <begin position="103"/>
        <end position="110"/>
    </location>
</feature>
<feature type="strand" evidence="13">
    <location>
        <begin position="115"/>
        <end position="125"/>
    </location>
</feature>
<feature type="strand" evidence="13">
    <location>
        <begin position="136"/>
        <end position="139"/>
    </location>
</feature>
<feature type="strand" evidence="13">
    <location>
        <begin position="144"/>
        <end position="146"/>
    </location>
</feature>
<feature type="strand" evidence="13">
    <location>
        <begin position="148"/>
        <end position="150"/>
    </location>
</feature>
<feature type="strand" evidence="13">
    <location>
        <begin position="152"/>
        <end position="154"/>
    </location>
</feature>
<feature type="strand" evidence="13">
    <location>
        <begin position="157"/>
        <end position="159"/>
    </location>
</feature>
<feature type="strand" evidence="13">
    <location>
        <begin position="165"/>
        <end position="170"/>
    </location>
</feature>
<feature type="turn" evidence="13">
    <location>
        <begin position="177"/>
        <end position="179"/>
    </location>
</feature>
<feature type="strand" evidence="13">
    <location>
        <begin position="180"/>
        <end position="186"/>
    </location>
</feature>
<feature type="strand" evidence="13">
    <location>
        <begin position="192"/>
        <end position="194"/>
    </location>
</feature>
<feature type="helix" evidence="13">
    <location>
        <begin position="199"/>
        <end position="201"/>
    </location>
</feature>
<feature type="strand" evidence="13">
    <location>
        <begin position="203"/>
        <end position="211"/>
    </location>
</feature>
<feature type="strand" evidence="13">
    <location>
        <begin position="214"/>
        <end position="217"/>
    </location>
</feature>
<feature type="strand" evidence="13">
    <location>
        <begin position="221"/>
        <end position="225"/>
    </location>
</feature>
<feature type="strand" evidence="14">
    <location>
        <begin position="713"/>
        <end position="721"/>
    </location>
</feature>
<feature type="strand" evidence="14">
    <location>
        <begin position="724"/>
        <end position="730"/>
    </location>
</feature>
<feature type="strand" evidence="14">
    <location>
        <begin position="741"/>
        <end position="752"/>
    </location>
</feature>
<feature type="strand" evidence="14">
    <location>
        <begin position="755"/>
        <end position="765"/>
    </location>
</feature>
<feature type="strand" evidence="14">
    <location>
        <begin position="772"/>
        <end position="775"/>
    </location>
</feature>
<feature type="strand" evidence="14">
    <location>
        <begin position="783"/>
        <end position="792"/>
    </location>
</feature>
<feature type="strand" evidence="14">
    <location>
        <begin position="803"/>
        <end position="806"/>
    </location>
</feature>
<keyword id="KW-0002">3D-structure</keyword>
<keyword id="KW-0130">Cell adhesion</keyword>
<keyword id="KW-1015">Disulfide bond</keyword>
<keyword id="KW-0325">Glycoprotein</keyword>
<keyword id="KW-0358">Heparin-binding</keyword>
<keyword id="KW-0378">Hydrolase</keyword>
<keyword id="KW-0393">Immunoglobulin domain</keyword>
<keyword id="KW-0472">Membrane</keyword>
<keyword id="KW-0597">Phosphoprotein</keyword>
<keyword id="KW-0904">Protein phosphatase</keyword>
<keyword id="KW-0675">Receptor</keyword>
<keyword id="KW-1185">Reference proteome</keyword>
<keyword id="KW-0677">Repeat</keyword>
<keyword id="KW-0732">Signal</keyword>
<keyword id="KW-0812">Transmembrane</keyword>
<keyword id="KW-1133">Transmembrane helix</keyword>
<name>PTPRF_MOUSE</name>
<evidence type="ECO:0000250" key="1"/>
<evidence type="ECO:0000250" key="2">
    <source>
        <dbReference type="UniProtKB" id="P10586"/>
    </source>
</evidence>
<evidence type="ECO:0000255" key="3"/>
<evidence type="ECO:0000255" key="4">
    <source>
        <dbReference type="PROSITE-ProRule" id="PRU00114"/>
    </source>
</evidence>
<evidence type="ECO:0000255" key="5">
    <source>
        <dbReference type="PROSITE-ProRule" id="PRU00160"/>
    </source>
</evidence>
<evidence type="ECO:0000255" key="6">
    <source>
        <dbReference type="PROSITE-ProRule" id="PRU00316"/>
    </source>
</evidence>
<evidence type="ECO:0000255" key="7">
    <source>
        <dbReference type="PROSITE-ProRule" id="PRU10044"/>
    </source>
</evidence>
<evidence type="ECO:0000256" key="8">
    <source>
        <dbReference type="SAM" id="MobiDB-lite"/>
    </source>
</evidence>
<evidence type="ECO:0000269" key="9">
    <source>
    </source>
</evidence>
<evidence type="ECO:0000269" key="10">
    <source>
    </source>
</evidence>
<evidence type="ECO:0000269" key="11">
    <source>
    </source>
</evidence>
<evidence type="ECO:0000305" key="12"/>
<evidence type="ECO:0007829" key="13">
    <source>
        <dbReference type="PDB" id="3PXH"/>
    </source>
</evidence>
<evidence type="ECO:0007829" key="14">
    <source>
        <dbReference type="PDB" id="6X39"/>
    </source>
</evidence>
<accession>A2A8L5</accession>
<accession>Q6PG86</accession>
<accession>Q9EQ17</accession>
<protein>
    <recommendedName>
        <fullName>Receptor-type tyrosine-protein phosphatase F</fullName>
        <ecNumber>3.1.3.48</ecNumber>
    </recommendedName>
    <alternativeName>
        <fullName>Leukocyte common antigen related</fullName>
        <shortName>LAR</shortName>
    </alternativeName>
</protein>
<comment type="function">
    <text evidence="1">Possible cell adhesion receptor. It possesses an intrinsic protein tyrosine phosphatase activity (PTPase) and dephosphorylates EPHA2 regulating its activity (By similarity).</text>
</comment>
<comment type="catalytic activity">
    <reaction evidence="7">
        <text>O-phospho-L-tyrosyl-[protein] + H2O = L-tyrosyl-[protein] + phosphate</text>
        <dbReference type="Rhea" id="RHEA:10684"/>
        <dbReference type="Rhea" id="RHEA-COMP:10136"/>
        <dbReference type="Rhea" id="RHEA-COMP:20101"/>
        <dbReference type="ChEBI" id="CHEBI:15377"/>
        <dbReference type="ChEBI" id="CHEBI:43474"/>
        <dbReference type="ChEBI" id="CHEBI:46858"/>
        <dbReference type="ChEBI" id="CHEBI:61978"/>
        <dbReference type="EC" id="3.1.3.48"/>
    </reaction>
</comment>
<comment type="subunit">
    <text evidence="1">Interacts with GRIP1. Interacts with PPFIA1, PPFIA2 and PPFIA3. Interacts with PTPRF.</text>
</comment>
<comment type="subcellular location">
    <subcellularLocation>
        <location evidence="12">Membrane</location>
        <topology evidence="12">Single-pass membrane protein</topology>
    </subcellularLocation>
</comment>
<comment type="tissue specificity">
    <text evidence="9">Expressed in the cell of the T lineage but not in cells of any other hemopoietic lineage.</text>
</comment>
<comment type="domain">
    <text evidence="1">The first PTPase domain has enzymatic activity, while the second one seems to affect the substrate specificity of the first one.</text>
</comment>
<comment type="similarity">
    <text evidence="12">Belongs to the protein-tyrosine phosphatase family. Receptor class 2A subfamily.</text>
</comment>
<reference key="1">
    <citation type="journal article" date="2001" name="Eur. J. Immunol.">
        <title>Within the hemopoietic system, LAR phosphatase is a T cell lineage-specific adhesion receptor-like protein whose phosphatase activity appears dispensable for T cell development, repertoire selection and function.</title>
        <authorList>
            <person name="Terszowski G."/>
            <person name="Jankowski A."/>
            <person name="Hendriks W.J.A.J."/>
            <person name="Rolink A.G."/>
            <person name="Kisielow P."/>
        </authorList>
    </citation>
    <scope>NUCLEOTIDE SEQUENCE [MRNA]</scope>
    <scope>TISSUE SPECIFICITY</scope>
    <source>
        <tissue>Thymus</tissue>
    </source>
</reference>
<reference key="2">
    <citation type="journal article" date="2009" name="PLoS Biol.">
        <title>Lineage-specific biology revealed by a finished genome assembly of the mouse.</title>
        <authorList>
            <person name="Church D.M."/>
            <person name="Goodstadt L."/>
            <person name="Hillier L.W."/>
            <person name="Zody M.C."/>
            <person name="Goldstein S."/>
            <person name="She X."/>
            <person name="Bult C.J."/>
            <person name="Agarwala R."/>
            <person name="Cherry J.L."/>
            <person name="DiCuccio M."/>
            <person name="Hlavina W."/>
            <person name="Kapustin Y."/>
            <person name="Meric P."/>
            <person name="Maglott D."/>
            <person name="Birtle Z."/>
            <person name="Marques A.C."/>
            <person name="Graves T."/>
            <person name="Zhou S."/>
            <person name="Teague B."/>
            <person name="Potamousis K."/>
            <person name="Churas C."/>
            <person name="Place M."/>
            <person name="Herschleb J."/>
            <person name="Runnheim R."/>
            <person name="Forrest D."/>
            <person name="Amos-Landgraf J."/>
            <person name="Schwartz D.C."/>
            <person name="Cheng Z."/>
            <person name="Lindblad-Toh K."/>
            <person name="Eichler E.E."/>
            <person name="Ponting C.P."/>
        </authorList>
    </citation>
    <scope>NUCLEOTIDE SEQUENCE [LARGE SCALE GENOMIC DNA]</scope>
    <source>
        <strain>C57BL/6J</strain>
    </source>
</reference>
<reference key="3">
    <citation type="journal article" date="2004" name="Genome Res.">
        <title>The status, quality, and expansion of the NIH full-length cDNA project: the Mammalian Gene Collection (MGC).</title>
        <authorList>
            <consortium name="The MGC Project Team"/>
        </authorList>
    </citation>
    <scope>NUCLEOTIDE SEQUENCE [LARGE SCALE MRNA] OF 370-1898</scope>
    <source>
        <strain>FVB/N</strain>
        <tissue>Mammary tumor</tissue>
    </source>
</reference>
<reference key="4">
    <citation type="journal article" date="2009" name="Nat. Biotechnol.">
        <title>Mass-spectrometric identification and relative quantification of N-linked cell surface glycoproteins.</title>
        <authorList>
            <person name="Wollscheid B."/>
            <person name="Bausch-Fluck D."/>
            <person name="Henderson C."/>
            <person name="O'Brien R."/>
            <person name="Bibel M."/>
            <person name="Schiess R."/>
            <person name="Aebersold R."/>
            <person name="Watts J.D."/>
        </authorList>
    </citation>
    <scope>GLYCOSYLATION [LARGE SCALE ANALYSIS] AT ASN-721; ASN-941 AND ASN-960</scope>
</reference>
<reference key="5">
    <citation type="journal article" date="2010" name="Cell">
        <title>A tissue-specific atlas of mouse protein phosphorylation and expression.</title>
        <authorList>
            <person name="Huttlin E.L."/>
            <person name="Jedrychowski M.P."/>
            <person name="Elias J.E."/>
            <person name="Goswami T."/>
            <person name="Rad R."/>
            <person name="Beausoleil S.A."/>
            <person name="Villen J."/>
            <person name="Haas W."/>
            <person name="Sowa M.E."/>
            <person name="Gygi S.P."/>
        </authorList>
    </citation>
    <scope>IDENTIFICATION BY MASS SPECTROMETRY [LARGE SCALE ANALYSIS]</scope>
    <source>
        <tissue>Brain</tissue>
        <tissue>Kidney</tissue>
        <tissue>Liver</tissue>
        <tissue>Lung</tissue>
    </source>
</reference>
<reference key="6">
    <citation type="journal article" date="2011" name="J. Mol. Biol.">
        <title>The immunoglobulin-like domains 1 and 2 of the protein tyrosine phosphatase LAR adopt an unusual horseshoe-like conformation.</title>
        <authorList>
            <person name="Biersmith B.H."/>
            <person name="Hammel M."/>
            <person name="Geisbrecht E.R."/>
            <person name="Bouyain S."/>
        </authorList>
    </citation>
    <scope>X-RAY CRYSTALLOGRAPHY (2.0 ANGSTROMS) OF 30-226</scope>
    <scope>HEPARIN-BINDING REGION</scope>
    <scope>DISULFIDE BONDS</scope>
</reference>
<gene>
    <name type="primary">Ptprf</name>
    <name type="synonym">Lar</name>
</gene>
<sequence length="1898" mass="211489">MAPEPAPGRRMVPLVPALVMLGLMAGAHGDSKPVFVKVPEDQTGLSGGVASFVCQATGEPKPRITWMKKGKKVSSQRFEVIEFDDGAGSVLRIQPLRVQRDEAIYECTATNSLGEINTSAKLSVLEEDQLPSGFPTIDMGPQLKVVEKGRTATMLCAAGGNPDPEISWFKDFLPVDPAASNGRIKQLRSGALQIESSEESDQGKYECVATNSAGTRYSAPANLYVRVRRVAPRFSIPPSSQEVMPGGSVNLTCVAVGAPMPYVKWMMGAEELTKEDEMPVGRNVLELSNVMRSANYTCVAISSLGMIEATAQVTVKALPKPPIDLVVTETTATSVTLTWDSGNTEPVSFYGIQYRAAGTDGPFQEVDGVASTRYSIGGLSPFSEYAFRVLAVNSIGRGPPSEAVRARTGEQAPSSPPRRVQARMLSASTMLVQWEPPEEPNGLVRGYRVYYTPDSRRPLSAWHKHNTDAGLLTTVGSLLPGITYSLRVLAFTAVGDGPPSPTIQVKTQQGVPAQPADFQANAESDTRIQLSWLLPPQERIVKYELVYWAAEDEGQQHKVTFDPTSSYTLEDLKPDTLYHFQLAARSDLGVGVFTPTVEARTAQSTPSAPPQKVTCVSTGSTTVRVSWVPPPADSRNGIITQYSVAYEAVDGEDRKRHVVDGISREHSSWDLLGLEKWTEYRVWVRAHTDVGPGPESSPVLVRTDEDVPSGPPRKVEVEPLNSTAVHVSWKLPVPNKQHGQIRGYQVTYVRLENGEPRGQPIIQDVMLAEAQETTISGLTPETTYSITVAAYTTKGDGARSKPKVVTTTGAVPGRPTMMVSTTAMHTALLQWHPPKELPGELLGYRLQYRRADEARPNTIDFGKDDQHFTVTGLHKGATYVFRLAAKNRAGPGEEFEKEITTPEDVPSGFPQNLRVTGLTTSTTELTWDPPVLAERNGHITNYTVVYRDINSQLELQNVTNDTHLTLLGLKPDTTYDIKVRAHTSKGAGPLSPSIQSRTMPVEQVFAKNFRVAAAMKTSVLLSWEVPDSYKSAVPFKILYNGQSVEVDGHSMRKLIADLQPNTEYSFVLMNRGSSAGGLQHLVSIRTAPDLLPQKPLPASAFIEDGRFSLSMPQVQDPSLVRWFYIVVVPIDRVGGNLLAPRWNTPEELELDELLEAIEQGEEKQRRRRRQAERLKPYVAAQVDVLPDTFTLGDKKSYRGFYNRPLSPDLSYQCFVLASLKEPMDQKRYASSPYSDEIVVQVTPAQQQEEPEMLWVTGPVLAVILIILIVIAILLFKRKRTHSPSSKDEQSIGLKDSLLAHSSDPVEMRRLNYQTPGMRDHPPIPITDLADNIERLKANDGLKFSQEYESIDPGQQFTWENSNSEVNKPKNRYANVIAYDHSRVLLTSIDGVPGSDYINANYIDGYRKQNAYIATQGPLPETMGDFWRMVWEQRTATVVMMTRLEEKSRVKCDQYWPVRGTETYGLIQVTLVDTVELATYTMRTFALHKSGSSEKRELRQFQFMAWPDHGVPEYPTPILAFLRRVKACNPLDAGPMVVHCSAGVGRTGCFIVIDAMLERMKHEKTVDIYGHVTCMRSQRNYMVQTEDQYVFIHEALLEAAMCGHTEVLARNLYAHIQKLGQVPPGESVTAMELEFKLLANSKAHTSRFVSANLPCNKFKNRLVNIMPYELTRVCLQPIRGVEGSDYINASFLDGYRQQKAYIATQGPLAESTEDFWRMLWEHNSTIIVMLTKLREMGREKCHQYWPAERSARYQYFVVDPMAEYNMPQYILREFKVTDARDGQSRTIRQFQFTDWPEQGVPKTGEGFIDFIGQVHKTKEQFGQDGPITVHCSAGVGRTGVFITLSIVLERMRYEGVVDMFQTVKTLRTQRPAMVQTEDQYQLCYRAALEYLGSFDHYAT</sequence>